<feature type="signal peptide" evidence="2">
    <location>
        <begin position="1"/>
        <end position="21"/>
    </location>
</feature>
<feature type="chain" id="PRO_0000022608" description="Colipase-like protein 2">
    <location>
        <begin position="22"/>
        <end position="100"/>
    </location>
</feature>
<feature type="disulfide bond" evidence="1">
    <location>
        <begin position="34"/>
        <end position="45"/>
    </location>
</feature>
<feature type="disulfide bond" evidence="1">
    <location>
        <begin position="40"/>
        <end position="56"/>
    </location>
</feature>
<feature type="disulfide bond" evidence="1">
    <location>
        <begin position="44"/>
        <end position="78"/>
    </location>
</feature>
<feature type="disulfide bond" evidence="1">
    <location>
        <begin position="66"/>
        <end position="86"/>
    </location>
</feature>
<feature type="disulfide bond" evidence="1">
    <location>
        <begin position="80"/>
        <end position="97"/>
    </location>
</feature>
<feature type="splice variant" id="VSP_035621" description="In isoform 2." evidence="3">
    <original>TKGATNIICPCRMGLTCISKDLMCSRRCHMI</original>
    <variation>WLELFKGRDRIIFIYEAPTPSLVSAHNQGSYQHHLPLPDGLDVHIQGLDVFPPVPYDLEEDAGWSLLPWGHRPWLPPTCSKSSS</variation>
    <location>
        <begin position="70"/>
        <end position="100"/>
    </location>
</feature>
<feature type="sequence conflict" description="In Ref. 1; AAQ89182." evidence="4" ref="1">
    <original>R</original>
    <variation>C</variation>
    <location sequence="Q6UWE3-2">
        <position position="79"/>
    </location>
</feature>
<gene>
    <name type="primary">CLPSL2</name>
    <name type="synonym">C6orf126</name>
    <name type="ORF">UNQ3045/PRO9861</name>
</gene>
<keyword id="KW-0025">Alternative splicing</keyword>
<keyword id="KW-0903">Direct protein sequencing</keyword>
<keyword id="KW-1015">Disulfide bond</keyword>
<keyword id="KW-1185">Reference proteome</keyword>
<keyword id="KW-0964">Secreted</keyword>
<keyword id="KW-0732">Signal</keyword>
<dbReference type="EMBL" id="AY358823">
    <property type="protein sequence ID" value="AAQ89182.1"/>
    <property type="molecule type" value="mRNA"/>
</dbReference>
<dbReference type="EMBL" id="AL157823">
    <property type="status" value="NOT_ANNOTATED_CDS"/>
    <property type="molecule type" value="Genomic_DNA"/>
</dbReference>
<dbReference type="CCDS" id="CCDS4810.2">
    <molecule id="Q6UWE3-1"/>
</dbReference>
<dbReference type="CCDS" id="CCDS69095.1">
    <molecule id="Q6UWE3-2"/>
</dbReference>
<dbReference type="RefSeq" id="NP_001273479.1">
    <molecule id="Q6UWE3-2"/>
    <property type="nucleotide sequence ID" value="NM_001286550.2"/>
</dbReference>
<dbReference type="RefSeq" id="NP_997292.2">
    <molecule id="Q6UWE3-1"/>
    <property type="nucleotide sequence ID" value="NM_207409.4"/>
</dbReference>
<dbReference type="SMR" id="Q6UWE3"/>
<dbReference type="BioGRID" id="133118">
    <property type="interactions" value="2"/>
</dbReference>
<dbReference type="IntAct" id="Q6UWE3">
    <property type="interactions" value="1"/>
</dbReference>
<dbReference type="STRING" id="9606.ENSP00000353639"/>
<dbReference type="iPTMnet" id="Q6UWE3"/>
<dbReference type="PhosphoSitePlus" id="Q6UWE3"/>
<dbReference type="BioMuta" id="CLPSL2"/>
<dbReference type="DMDM" id="212276514"/>
<dbReference type="MassIVE" id="Q6UWE3"/>
<dbReference type="PaxDb" id="9606-ENSP00000353639"/>
<dbReference type="PeptideAtlas" id="Q6UWE3"/>
<dbReference type="TopDownProteomics" id="Q6UWE3-2">
    <molecule id="Q6UWE3-2"/>
</dbReference>
<dbReference type="Antibodypedia" id="64892">
    <property type="antibodies" value="2 antibodies from 2 providers"/>
</dbReference>
<dbReference type="DNASU" id="389383"/>
<dbReference type="Ensembl" id="ENST00000360454.6">
    <molecule id="Q6UWE3-2"/>
    <property type="protein sequence ID" value="ENSP00000353639.2"/>
    <property type="gene ID" value="ENSG00000196748.10"/>
</dbReference>
<dbReference type="Ensembl" id="ENST00000403376.4">
    <molecule id="Q6UWE3-1"/>
    <property type="protein sequence ID" value="ENSP00000385898.3"/>
    <property type="gene ID" value="ENSG00000196748.10"/>
</dbReference>
<dbReference type="GeneID" id="389383"/>
<dbReference type="KEGG" id="hsa:389383"/>
<dbReference type="MANE-Select" id="ENST00000403376.4">
    <property type="protein sequence ID" value="ENSP00000385898.3"/>
    <property type="RefSeq nucleotide sequence ID" value="NM_207409.4"/>
    <property type="RefSeq protein sequence ID" value="NP_997292.2"/>
</dbReference>
<dbReference type="UCSC" id="uc003olc.3">
    <molecule id="Q6UWE3-1"/>
    <property type="organism name" value="human"/>
</dbReference>
<dbReference type="AGR" id="HGNC:21250"/>
<dbReference type="CTD" id="389383"/>
<dbReference type="DisGeNET" id="389383"/>
<dbReference type="GeneCards" id="CLPSL2"/>
<dbReference type="HGNC" id="HGNC:21250">
    <property type="gene designation" value="CLPSL2"/>
</dbReference>
<dbReference type="HPA" id="ENSG00000196748">
    <property type="expression patterns" value="Tissue enriched (epididymis)"/>
</dbReference>
<dbReference type="neXtProt" id="NX_Q6UWE3"/>
<dbReference type="OpenTargets" id="ENSG00000196748"/>
<dbReference type="PharmGKB" id="PA134977993"/>
<dbReference type="VEuPathDB" id="HostDB:ENSG00000196748"/>
<dbReference type="eggNOG" id="ENOG502TDRC">
    <property type="taxonomic scope" value="Eukaryota"/>
</dbReference>
<dbReference type="GeneTree" id="ENSGT00390000011494"/>
<dbReference type="HOGENOM" id="CLU_1730871_0_0_1"/>
<dbReference type="InParanoid" id="Q6UWE3"/>
<dbReference type="OMA" id="SDCCLMD"/>
<dbReference type="OrthoDB" id="9834137at2759"/>
<dbReference type="PAN-GO" id="Q6UWE3">
    <property type="GO annotations" value="1 GO annotation based on evolutionary models"/>
</dbReference>
<dbReference type="PhylomeDB" id="Q6UWE3"/>
<dbReference type="TreeFam" id="TF343049"/>
<dbReference type="PathwayCommons" id="Q6UWE3"/>
<dbReference type="SignaLink" id="Q6UWE3"/>
<dbReference type="BioGRID-ORCS" id="389383">
    <property type="hits" value="20 hits in 1144 CRISPR screens"/>
</dbReference>
<dbReference type="ChiTaRS" id="CLPSL2">
    <property type="organism name" value="human"/>
</dbReference>
<dbReference type="GenomeRNAi" id="389383"/>
<dbReference type="Pharos" id="Q6UWE3">
    <property type="development level" value="Tdark"/>
</dbReference>
<dbReference type="PRO" id="PR:Q6UWE3"/>
<dbReference type="Proteomes" id="UP000005640">
    <property type="component" value="Chromosome 6"/>
</dbReference>
<dbReference type="RNAct" id="Q6UWE3">
    <property type="molecule type" value="protein"/>
</dbReference>
<dbReference type="Bgee" id="ENSG00000196748">
    <property type="expression patterns" value="Expressed in male germ line stem cell (sensu Vertebrata) in testis and 54 other cell types or tissues"/>
</dbReference>
<dbReference type="GO" id="GO:0005576">
    <property type="term" value="C:extracellular region"/>
    <property type="evidence" value="ECO:0007669"/>
    <property type="project" value="UniProtKB-SubCell"/>
</dbReference>
<dbReference type="GO" id="GO:0008047">
    <property type="term" value="F:enzyme activator activity"/>
    <property type="evidence" value="ECO:0007669"/>
    <property type="project" value="InterPro"/>
</dbReference>
<dbReference type="GO" id="GO:0007586">
    <property type="term" value="P:digestion"/>
    <property type="evidence" value="ECO:0007669"/>
    <property type="project" value="InterPro"/>
</dbReference>
<dbReference type="GO" id="GO:0016042">
    <property type="term" value="P:lipid catabolic process"/>
    <property type="evidence" value="ECO:0007669"/>
    <property type="project" value="InterPro"/>
</dbReference>
<dbReference type="GO" id="GO:0032094">
    <property type="term" value="P:response to food"/>
    <property type="evidence" value="ECO:0000318"/>
    <property type="project" value="GO_Central"/>
</dbReference>
<dbReference type="FunFam" id="2.10.80.10:FF:000006">
    <property type="entry name" value="Colipase-like protein 2"/>
    <property type="match status" value="1"/>
</dbReference>
<dbReference type="Gene3D" id="2.10.80.10">
    <property type="entry name" value="Lipase, subunit A"/>
    <property type="match status" value="1"/>
</dbReference>
<dbReference type="InterPro" id="IPR001981">
    <property type="entry name" value="Colipase"/>
</dbReference>
<dbReference type="PANTHER" id="PTHR10041">
    <property type="entry name" value="COLIPASE"/>
    <property type="match status" value="1"/>
</dbReference>
<dbReference type="PANTHER" id="PTHR10041:SF3">
    <property type="entry name" value="COLIPASE-LIKE PROTEIN 2"/>
    <property type="match status" value="1"/>
</dbReference>
<dbReference type="PROSITE" id="PS51342">
    <property type="entry name" value="COLIPASE_2"/>
    <property type="match status" value="1"/>
</dbReference>
<organism>
    <name type="scientific">Homo sapiens</name>
    <name type="common">Human</name>
    <dbReference type="NCBI Taxonomy" id="9606"/>
    <lineage>
        <taxon>Eukaryota</taxon>
        <taxon>Metazoa</taxon>
        <taxon>Chordata</taxon>
        <taxon>Craniata</taxon>
        <taxon>Vertebrata</taxon>
        <taxon>Euteleostomi</taxon>
        <taxon>Mammalia</taxon>
        <taxon>Eutheria</taxon>
        <taxon>Euarchontoglires</taxon>
        <taxon>Primates</taxon>
        <taxon>Haplorrhini</taxon>
        <taxon>Catarrhini</taxon>
        <taxon>Hominidae</taxon>
        <taxon>Homo</taxon>
    </lineage>
</organism>
<name>COLL2_HUMAN</name>
<evidence type="ECO:0000255" key="1">
    <source>
        <dbReference type="PROSITE-ProRule" id="PRU00674"/>
    </source>
</evidence>
<evidence type="ECO:0000269" key="2">
    <source>
    </source>
</evidence>
<evidence type="ECO:0000303" key="3">
    <source>
    </source>
</evidence>
<evidence type="ECO:0000305" key="4"/>
<sequence>MAAALALVAGVLSGAVLPLWSALPQYKKKITDRCFHHSECYSGCCLMDLDSGGAFCAPRARITMICLPQTKGATNIICPCRMGLTCISKDLMCSRRCHMI</sequence>
<comment type="interaction">
    <interactant intactId="EBI-12183429">
        <id>Q6UWE3</id>
    </interactant>
    <interactant intactId="EBI-947187">
        <id>Q9UHD9</id>
        <label>UBQLN2</label>
    </interactant>
    <organismsDiffer>false</organismsDiffer>
    <experiments>6</experiments>
</comment>
<comment type="subcellular location">
    <subcellularLocation>
        <location evidence="4">Secreted</location>
    </subcellularLocation>
</comment>
<comment type="alternative products">
    <event type="alternative splicing"/>
    <isoform>
        <id>Q6UWE3-1</id>
        <name>1</name>
        <sequence type="displayed"/>
    </isoform>
    <isoform>
        <id>Q6UWE3-2</id>
        <name>2</name>
        <sequence type="described" ref="VSP_035621"/>
    </isoform>
</comment>
<comment type="similarity">
    <text evidence="1">Belongs to the colipase family.</text>
</comment>
<reference key="1">
    <citation type="journal article" date="2003" name="Genome Res.">
        <title>The secreted protein discovery initiative (SPDI), a large-scale effort to identify novel human secreted and transmembrane proteins: a bioinformatics assessment.</title>
        <authorList>
            <person name="Clark H.F."/>
            <person name="Gurney A.L."/>
            <person name="Abaya E."/>
            <person name="Baker K."/>
            <person name="Baldwin D.T."/>
            <person name="Brush J."/>
            <person name="Chen J."/>
            <person name="Chow B."/>
            <person name="Chui C."/>
            <person name="Crowley C."/>
            <person name="Currell B."/>
            <person name="Deuel B."/>
            <person name="Dowd P."/>
            <person name="Eaton D."/>
            <person name="Foster J.S."/>
            <person name="Grimaldi C."/>
            <person name="Gu Q."/>
            <person name="Hass P.E."/>
            <person name="Heldens S."/>
            <person name="Huang A."/>
            <person name="Kim H.S."/>
            <person name="Klimowski L."/>
            <person name="Jin Y."/>
            <person name="Johnson S."/>
            <person name="Lee J."/>
            <person name="Lewis L."/>
            <person name="Liao D."/>
            <person name="Mark M.R."/>
            <person name="Robbie E."/>
            <person name="Sanchez C."/>
            <person name="Schoenfeld J."/>
            <person name="Seshagiri S."/>
            <person name="Simmons L."/>
            <person name="Singh J."/>
            <person name="Smith V."/>
            <person name="Stinson J."/>
            <person name="Vagts A."/>
            <person name="Vandlen R.L."/>
            <person name="Watanabe C."/>
            <person name="Wieand D."/>
            <person name="Woods K."/>
            <person name="Xie M.-H."/>
            <person name="Yansura D.G."/>
            <person name="Yi S."/>
            <person name="Yu G."/>
            <person name="Yuan J."/>
            <person name="Zhang M."/>
            <person name="Zhang Z."/>
            <person name="Goddard A.D."/>
            <person name="Wood W.I."/>
            <person name="Godowski P.J."/>
            <person name="Gray A.M."/>
        </authorList>
    </citation>
    <scope>NUCLEOTIDE SEQUENCE [LARGE SCALE MRNA] (ISOFORM 2)</scope>
</reference>
<reference key="2">
    <citation type="journal article" date="2003" name="Nature">
        <title>The DNA sequence and analysis of human chromosome 6.</title>
        <authorList>
            <person name="Mungall A.J."/>
            <person name="Palmer S.A."/>
            <person name="Sims S.K."/>
            <person name="Edwards C.A."/>
            <person name="Ashurst J.L."/>
            <person name="Wilming L."/>
            <person name="Jones M.C."/>
            <person name="Horton R."/>
            <person name="Hunt S.E."/>
            <person name="Scott C.E."/>
            <person name="Gilbert J.G.R."/>
            <person name="Clamp M.E."/>
            <person name="Bethel G."/>
            <person name="Milne S."/>
            <person name="Ainscough R."/>
            <person name="Almeida J.P."/>
            <person name="Ambrose K.D."/>
            <person name="Andrews T.D."/>
            <person name="Ashwell R.I.S."/>
            <person name="Babbage A.K."/>
            <person name="Bagguley C.L."/>
            <person name="Bailey J."/>
            <person name="Banerjee R."/>
            <person name="Barker D.J."/>
            <person name="Barlow K.F."/>
            <person name="Bates K."/>
            <person name="Beare D.M."/>
            <person name="Beasley H."/>
            <person name="Beasley O."/>
            <person name="Bird C.P."/>
            <person name="Blakey S.E."/>
            <person name="Bray-Allen S."/>
            <person name="Brook J."/>
            <person name="Brown A.J."/>
            <person name="Brown J.Y."/>
            <person name="Burford D.C."/>
            <person name="Burrill W."/>
            <person name="Burton J."/>
            <person name="Carder C."/>
            <person name="Carter N.P."/>
            <person name="Chapman J.C."/>
            <person name="Clark S.Y."/>
            <person name="Clark G."/>
            <person name="Clee C.M."/>
            <person name="Clegg S."/>
            <person name="Cobley V."/>
            <person name="Collier R.E."/>
            <person name="Collins J.E."/>
            <person name="Colman L.K."/>
            <person name="Corby N.R."/>
            <person name="Coville G.J."/>
            <person name="Culley K.M."/>
            <person name="Dhami P."/>
            <person name="Davies J."/>
            <person name="Dunn M."/>
            <person name="Earthrowl M.E."/>
            <person name="Ellington A.E."/>
            <person name="Evans K.A."/>
            <person name="Faulkner L."/>
            <person name="Francis M.D."/>
            <person name="Frankish A."/>
            <person name="Frankland J."/>
            <person name="French L."/>
            <person name="Garner P."/>
            <person name="Garnett J."/>
            <person name="Ghori M.J."/>
            <person name="Gilby L.M."/>
            <person name="Gillson C.J."/>
            <person name="Glithero R.J."/>
            <person name="Grafham D.V."/>
            <person name="Grant M."/>
            <person name="Gribble S."/>
            <person name="Griffiths C."/>
            <person name="Griffiths M.N.D."/>
            <person name="Hall R."/>
            <person name="Halls K.S."/>
            <person name="Hammond S."/>
            <person name="Harley J.L."/>
            <person name="Hart E.A."/>
            <person name="Heath P.D."/>
            <person name="Heathcott R."/>
            <person name="Holmes S.J."/>
            <person name="Howden P.J."/>
            <person name="Howe K.L."/>
            <person name="Howell G.R."/>
            <person name="Huckle E."/>
            <person name="Humphray S.J."/>
            <person name="Humphries M.D."/>
            <person name="Hunt A.R."/>
            <person name="Johnson C.M."/>
            <person name="Joy A.A."/>
            <person name="Kay M."/>
            <person name="Keenan S.J."/>
            <person name="Kimberley A.M."/>
            <person name="King A."/>
            <person name="Laird G.K."/>
            <person name="Langford C."/>
            <person name="Lawlor S."/>
            <person name="Leongamornlert D.A."/>
            <person name="Leversha M."/>
            <person name="Lloyd C.R."/>
            <person name="Lloyd D.M."/>
            <person name="Loveland J.E."/>
            <person name="Lovell J."/>
            <person name="Martin S."/>
            <person name="Mashreghi-Mohammadi M."/>
            <person name="Maslen G.L."/>
            <person name="Matthews L."/>
            <person name="McCann O.T."/>
            <person name="McLaren S.J."/>
            <person name="McLay K."/>
            <person name="McMurray A."/>
            <person name="Moore M.J.F."/>
            <person name="Mullikin J.C."/>
            <person name="Niblett D."/>
            <person name="Nickerson T."/>
            <person name="Novik K.L."/>
            <person name="Oliver K."/>
            <person name="Overton-Larty E.K."/>
            <person name="Parker A."/>
            <person name="Patel R."/>
            <person name="Pearce A.V."/>
            <person name="Peck A.I."/>
            <person name="Phillimore B.J.C.T."/>
            <person name="Phillips S."/>
            <person name="Plumb R.W."/>
            <person name="Porter K.M."/>
            <person name="Ramsey Y."/>
            <person name="Ranby S.A."/>
            <person name="Rice C.M."/>
            <person name="Ross M.T."/>
            <person name="Searle S.M."/>
            <person name="Sehra H.K."/>
            <person name="Sheridan E."/>
            <person name="Skuce C.D."/>
            <person name="Smith S."/>
            <person name="Smith M."/>
            <person name="Spraggon L."/>
            <person name="Squares S.L."/>
            <person name="Steward C.A."/>
            <person name="Sycamore N."/>
            <person name="Tamlyn-Hall G."/>
            <person name="Tester J."/>
            <person name="Theaker A.J."/>
            <person name="Thomas D.W."/>
            <person name="Thorpe A."/>
            <person name="Tracey A."/>
            <person name="Tromans A."/>
            <person name="Tubby B."/>
            <person name="Wall M."/>
            <person name="Wallis J.M."/>
            <person name="West A.P."/>
            <person name="White S.S."/>
            <person name="Whitehead S.L."/>
            <person name="Whittaker H."/>
            <person name="Wild A."/>
            <person name="Willey D.J."/>
            <person name="Wilmer T.E."/>
            <person name="Wood J.M."/>
            <person name="Wray P.W."/>
            <person name="Wyatt J.C."/>
            <person name="Young L."/>
            <person name="Younger R.M."/>
            <person name="Bentley D.R."/>
            <person name="Coulson A."/>
            <person name="Durbin R.M."/>
            <person name="Hubbard T."/>
            <person name="Sulston J.E."/>
            <person name="Dunham I."/>
            <person name="Rogers J."/>
            <person name="Beck S."/>
        </authorList>
    </citation>
    <scope>NUCLEOTIDE SEQUENCE [LARGE SCALE GENOMIC DNA]</scope>
</reference>
<reference key="3">
    <citation type="journal article" date="2004" name="Protein Sci.">
        <title>Signal peptide prediction based on analysis of experimentally verified cleavage sites.</title>
        <authorList>
            <person name="Zhang Z."/>
            <person name="Henzel W.J."/>
        </authorList>
    </citation>
    <scope>PROTEIN SEQUENCE OF 22-35</scope>
</reference>
<proteinExistence type="evidence at protein level"/>
<protein>
    <recommendedName>
        <fullName>Colipase-like protein 2</fullName>
    </recommendedName>
</protein>
<accession>Q6UWE3</accession>
<accession>B0QZ45</accession>
<accession>Q5T9G3</accession>